<reference key="1">
    <citation type="submission" date="1996-07" db="EMBL/GenBank/DDBJ databases">
        <authorList>
            <person name="Schwechheimer C."/>
        </authorList>
    </citation>
    <scope>NUCLEOTIDE SEQUENCE [MRNA]</scope>
    <source>
        <strain>cv. Columbia</strain>
    </source>
</reference>
<reference key="2">
    <citation type="journal article" date="1999" name="Plant Mol. Biol.">
        <title>Characterization and functional analysis of Arabidopsis TFIIA reveal that the evolutionarily unconserved region of the large subunit has a transcription activation domain.</title>
        <authorList>
            <person name="Li Y.F."/>
            <person name="Le Gourierrec J."/>
            <person name="Torki M."/>
            <person name="Kim Y.J."/>
            <person name="Guerineau F."/>
            <person name="Zhou D.X."/>
        </authorList>
    </citation>
    <scope>NUCLEOTIDE SEQUENCE [MRNA]</scope>
</reference>
<reference key="3">
    <citation type="journal article" date="1999" name="Nature">
        <title>Sequence and analysis of chromosome 4 of the plant Arabidopsis thaliana.</title>
        <authorList>
            <person name="Mayer K.F.X."/>
            <person name="Schueller C."/>
            <person name="Wambutt R."/>
            <person name="Murphy G."/>
            <person name="Volckaert G."/>
            <person name="Pohl T."/>
            <person name="Duesterhoeft A."/>
            <person name="Stiekema W."/>
            <person name="Entian K.-D."/>
            <person name="Terryn N."/>
            <person name="Harris B."/>
            <person name="Ansorge W."/>
            <person name="Brandt P."/>
            <person name="Grivell L.A."/>
            <person name="Rieger M."/>
            <person name="Weichselgartner M."/>
            <person name="de Simone V."/>
            <person name="Obermaier B."/>
            <person name="Mache R."/>
            <person name="Mueller M."/>
            <person name="Kreis M."/>
            <person name="Delseny M."/>
            <person name="Puigdomenech P."/>
            <person name="Watson M."/>
            <person name="Schmidtheini T."/>
            <person name="Reichert B."/>
            <person name="Portetelle D."/>
            <person name="Perez-Alonso M."/>
            <person name="Boutry M."/>
            <person name="Bancroft I."/>
            <person name="Vos P."/>
            <person name="Hoheisel J."/>
            <person name="Zimmermann W."/>
            <person name="Wedler H."/>
            <person name="Ridley P."/>
            <person name="Langham S.-A."/>
            <person name="McCullagh B."/>
            <person name="Bilham L."/>
            <person name="Robben J."/>
            <person name="van der Schueren J."/>
            <person name="Grymonprez B."/>
            <person name="Chuang Y.-J."/>
            <person name="Vandenbussche F."/>
            <person name="Braeken M."/>
            <person name="Weltjens I."/>
            <person name="Voet M."/>
            <person name="Bastiaens I."/>
            <person name="Aert R."/>
            <person name="Defoor E."/>
            <person name="Weitzenegger T."/>
            <person name="Bothe G."/>
            <person name="Ramsperger U."/>
            <person name="Hilbert H."/>
            <person name="Braun M."/>
            <person name="Holzer E."/>
            <person name="Brandt A."/>
            <person name="Peters S."/>
            <person name="van Staveren M."/>
            <person name="Dirkse W."/>
            <person name="Mooijman P."/>
            <person name="Klein Lankhorst R."/>
            <person name="Rose M."/>
            <person name="Hauf J."/>
            <person name="Koetter P."/>
            <person name="Berneiser S."/>
            <person name="Hempel S."/>
            <person name="Feldpausch M."/>
            <person name="Lamberth S."/>
            <person name="Van den Daele H."/>
            <person name="De Keyser A."/>
            <person name="Buysshaert C."/>
            <person name="Gielen J."/>
            <person name="Villarroel R."/>
            <person name="De Clercq R."/>
            <person name="van Montagu M."/>
            <person name="Rogers J."/>
            <person name="Cronin A."/>
            <person name="Quail M.A."/>
            <person name="Bray-Allen S."/>
            <person name="Clark L."/>
            <person name="Doggett J."/>
            <person name="Hall S."/>
            <person name="Kay M."/>
            <person name="Lennard N."/>
            <person name="McLay K."/>
            <person name="Mayes R."/>
            <person name="Pettett A."/>
            <person name="Rajandream M.A."/>
            <person name="Lyne M."/>
            <person name="Benes V."/>
            <person name="Rechmann S."/>
            <person name="Borkova D."/>
            <person name="Bloecker H."/>
            <person name="Scharfe M."/>
            <person name="Grimm M."/>
            <person name="Loehnert T.-H."/>
            <person name="Dose S."/>
            <person name="de Haan M."/>
            <person name="Maarse A.C."/>
            <person name="Schaefer M."/>
            <person name="Mueller-Auer S."/>
            <person name="Gabel C."/>
            <person name="Fuchs M."/>
            <person name="Fartmann B."/>
            <person name="Granderath K."/>
            <person name="Dauner D."/>
            <person name="Herzl A."/>
            <person name="Neumann S."/>
            <person name="Argiriou A."/>
            <person name="Vitale D."/>
            <person name="Liguori R."/>
            <person name="Piravandi E."/>
            <person name="Massenet O."/>
            <person name="Quigley F."/>
            <person name="Clabauld G."/>
            <person name="Muendlein A."/>
            <person name="Felber R."/>
            <person name="Schnabl S."/>
            <person name="Hiller R."/>
            <person name="Schmidt W."/>
            <person name="Lecharny A."/>
            <person name="Aubourg S."/>
            <person name="Chefdor F."/>
            <person name="Cooke R."/>
            <person name="Berger C."/>
            <person name="Monfort A."/>
            <person name="Casacuberta E."/>
            <person name="Gibbons T."/>
            <person name="Weber N."/>
            <person name="Vandenbol M."/>
            <person name="Bargues M."/>
            <person name="Terol J."/>
            <person name="Torres A."/>
            <person name="Perez-Perez A."/>
            <person name="Purnelle B."/>
            <person name="Bent E."/>
            <person name="Johnson S."/>
            <person name="Tacon D."/>
            <person name="Jesse T."/>
            <person name="Heijnen L."/>
            <person name="Schwarz S."/>
            <person name="Scholler P."/>
            <person name="Heber S."/>
            <person name="Francs P."/>
            <person name="Bielke C."/>
            <person name="Frishman D."/>
            <person name="Haase D."/>
            <person name="Lemcke K."/>
            <person name="Mewes H.-W."/>
            <person name="Stocker S."/>
            <person name="Zaccaria P."/>
            <person name="Bevan M."/>
            <person name="Wilson R.K."/>
            <person name="de la Bastide M."/>
            <person name="Habermann K."/>
            <person name="Parnell L."/>
            <person name="Dedhia N."/>
            <person name="Gnoj L."/>
            <person name="Schutz K."/>
            <person name="Huang E."/>
            <person name="Spiegel L."/>
            <person name="Sekhon M."/>
            <person name="Murray J."/>
            <person name="Sheet P."/>
            <person name="Cordes M."/>
            <person name="Abu-Threideh J."/>
            <person name="Stoneking T."/>
            <person name="Kalicki J."/>
            <person name="Graves T."/>
            <person name="Harmon G."/>
            <person name="Edwards J."/>
            <person name="Latreille P."/>
            <person name="Courtney L."/>
            <person name="Cloud J."/>
            <person name="Abbott A."/>
            <person name="Scott K."/>
            <person name="Johnson D."/>
            <person name="Minx P."/>
            <person name="Bentley D."/>
            <person name="Fulton B."/>
            <person name="Miller N."/>
            <person name="Greco T."/>
            <person name="Kemp K."/>
            <person name="Kramer J."/>
            <person name="Fulton L."/>
            <person name="Mardis E."/>
            <person name="Dante M."/>
            <person name="Pepin K."/>
            <person name="Hillier L.W."/>
            <person name="Nelson J."/>
            <person name="Spieth J."/>
            <person name="Ryan E."/>
            <person name="Andrews S."/>
            <person name="Geisel C."/>
            <person name="Layman D."/>
            <person name="Du H."/>
            <person name="Ali J."/>
            <person name="Berghoff A."/>
            <person name="Jones K."/>
            <person name="Drone K."/>
            <person name="Cotton M."/>
            <person name="Joshu C."/>
            <person name="Antonoiu B."/>
            <person name="Zidanic M."/>
            <person name="Strong C."/>
            <person name="Sun H."/>
            <person name="Lamar B."/>
            <person name="Yordan C."/>
            <person name="Ma P."/>
            <person name="Zhong J."/>
            <person name="Preston R."/>
            <person name="Vil D."/>
            <person name="Shekher M."/>
            <person name="Matero A."/>
            <person name="Shah R."/>
            <person name="Swaby I.K."/>
            <person name="O'Shaughnessy A."/>
            <person name="Rodriguez M."/>
            <person name="Hoffman J."/>
            <person name="Till S."/>
            <person name="Granat S."/>
            <person name="Shohdy N."/>
            <person name="Hasegawa A."/>
            <person name="Hameed A."/>
            <person name="Lodhi M."/>
            <person name="Johnson A."/>
            <person name="Chen E."/>
            <person name="Marra M.A."/>
            <person name="Martienssen R."/>
            <person name="McCombie W.R."/>
        </authorList>
    </citation>
    <scope>NUCLEOTIDE SEQUENCE [LARGE SCALE GENOMIC DNA]</scope>
    <source>
        <strain>cv. Columbia</strain>
    </source>
</reference>
<reference key="4">
    <citation type="journal article" date="2017" name="Plant J.">
        <title>Araport11: a complete reannotation of the Arabidopsis thaliana reference genome.</title>
        <authorList>
            <person name="Cheng C.Y."/>
            <person name="Krishnakumar V."/>
            <person name="Chan A.P."/>
            <person name="Thibaud-Nissen F."/>
            <person name="Schobel S."/>
            <person name="Town C.D."/>
        </authorList>
    </citation>
    <scope>GENOME REANNOTATION</scope>
    <source>
        <strain>cv. Columbia</strain>
    </source>
</reference>
<reference key="5">
    <citation type="journal article" date="2003" name="Science">
        <title>Empirical analysis of transcriptional activity in the Arabidopsis genome.</title>
        <authorList>
            <person name="Yamada K."/>
            <person name="Lim J."/>
            <person name="Dale J.M."/>
            <person name="Chen H."/>
            <person name="Shinn P."/>
            <person name="Palm C.J."/>
            <person name="Southwick A.M."/>
            <person name="Wu H.C."/>
            <person name="Kim C.J."/>
            <person name="Nguyen M."/>
            <person name="Pham P.K."/>
            <person name="Cheuk R.F."/>
            <person name="Karlin-Newmann G."/>
            <person name="Liu S.X."/>
            <person name="Lam B."/>
            <person name="Sakano H."/>
            <person name="Wu T."/>
            <person name="Yu G."/>
            <person name="Miranda M."/>
            <person name="Quach H.L."/>
            <person name="Tripp M."/>
            <person name="Chang C.H."/>
            <person name="Lee J.M."/>
            <person name="Toriumi M.J."/>
            <person name="Chan M.M."/>
            <person name="Tang C.C."/>
            <person name="Onodera C.S."/>
            <person name="Deng J.M."/>
            <person name="Akiyama K."/>
            <person name="Ansari Y."/>
            <person name="Arakawa T."/>
            <person name="Banh J."/>
            <person name="Banno F."/>
            <person name="Bowser L."/>
            <person name="Brooks S.Y."/>
            <person name="Carninci P."/>
            <person name="Chao Q."/>
            <person name="Choy N."/>
            <person name="Enju A."/>
            <person name="Goldsmith A.D."/>
            <person name="Gurjal M."/>
            <person name="Hansen N.F."/>
            <person name="Hayashizaki Y."/>
            <person name="Johnson-Hopson C."/>
            <person name="Hsuan V.W."/>
            <person name="Iida K."/>
            <person name="Karnes M."/>
            <person name="Khan S."/>
            <person name="Koesema E."/>
            <person name="Ishida J."/>
            <person name="Jiang P.X."/>
            <person name="Jones T."/>
            <person name="Kawai J."/>
            <person name="Kamiya A."/>
            <person name="Meyers C."/>
            <person name="Nakajima M."/>
            <person name="Narusaka M."/>
            <person name="Seki M."/>
            <person name="Sakurai T."/>
            <person name="Satou M."/>
            <person name="Tamse R."/>
            <person name="Vaysberg M."/>
            <person name="Wallender E.K."/>
            <person name="Wong C."/>
            <person name="Yamamura Y."/>
            <person name="Yuan S."/>
            <person name="Shinozaki K."/>
            <person name="Davis R.W."/>
            <person name="Theologis A."/>
            <person name="Ecker J.R."/>
        </authorList>
    </citation>
    <scope>NUCLEOTIDE SEQUENCE [LARGE SCALE MRNA]</scope>
    <source>
        <strain>cv. Columbia</strain>
    </source>
</reference>
<reference key="6">
    <citation type="submission" date="2002-03" db="EMBL/GenBank/DDBJ databases">
        <title>Full-length cDNA from Arabidopsis thaliana.</title>
        <authorList>
            <person name="Brover V.V."/>
            <person name="Troukhan M.E."/>
            <person name="Alexandrov N.A."/>
            <person name="Lu Y.-P."/>
            <person name="Flavell R.B."/>
            <person name="Feldmann K.A."/>
        </authorList>
    </citation>
    <scope>NUCLEOTIDE SEQUENCE [LARGE SCALE MRNA]</scope>
</reference>
<protein>
    <recommendedName>
        <fullName>Transcription initiation factor IIA subunit 2</fullName>
    </recommendedName>
    <alternativeName>
        <fullName>General transcription factor IIA subunit 2</fullName>
    </alternativeName>
    <alternativeName>
        <fullName>Transcription initiation factor IIA gamma chain</fullName>
        <shortName>TFIIA-gamma</shortName>
    </alternativeName>
</protein>
<sequence length="106" mass="12140">MATFELYRRSTIGMCLTETLDEMVQSGTLSPELAIQVLVQFDKSMTEALESQVKTKVSIKGHLHTYRFCDNVWTFILQDAMFKSDDRQENVSRVKIVACDSKLLTQ</sequence>
<dbReference type="EMBL" id="X98862">
    <property type="protein sequence ID" value="CAA67369.1"/>
    <property type="molecule type" value="mRNA"/>
</dbReference>
<dbReference type="EMBL" id="AJ223634">
    <property type="protein sequence ID" value="CAA11524.1"/>
    <property type="molecule type" value="mRNA"/>
</dbReference>
<dbReference type="EMBL" id="AL078637">
    <property type="protein sequence ID" value="CAB45079.1"/>
    <property type="molecule type" value="Genomic_DNA"/>
</dbReference>
<dbReference type="EMBL" id="AL161561">
    <property type="protein sequence ID" value="CAB79354.1"/>
    <property type="molecule type" value="Genomic_DNA"/>
</dbReference>
<dbReference type="EMBL" id="CP002687">
    <property type="protein sequence ID" value="AEE84904.1"/>
    <property type="molecule type" value="Genomic_DNA"/>
</dbReference>
<dbReference type="EMBL" id="CP002687">
    <property type="protein sequence ID" value="AEE84905.1"/>
    <property type="molecule type" value="Genomic_DNA"/>
</dbReference>
<dbReference type="EMBL" id="AY072192">
    <property type="protein sequence ID" value="AAL60014.1"/>
    <property type="molecule type" value="mRNA"/>
</dbReference>
<dbReference type="EMBL" id="AY096423">
    <property type="protein sequence ID" value="AAM20063.1"/>
    <property type="molecule type" value="mRNA"/>
</dbReference>
<dbReference type="EMBL" id="AY085740">
    <property type="protein sequence ID" value="AAM62958.1"/>
    <property type="molecule type" value="mRNA"/>
</dbReference>
<dbReference type="PIR" id="T09907">
    <property type="entry name" value="T09907"/>
</dbReference>
<dbReference type="RefSeq" id="NP_194175.1">
    <property type="nucleotide sequence ID" value="NM_118577.5"/>
</dbReference>
<dbReference type="RefSeq" id="NP_849434.1">
    <property type="nucleotide sequence ID" value="NM_179103.3"/>
</dbReference>
<dbReference type="SMR" id="Q39236"/>
<dbReference type="BioGRID" id="13835">
    <property type="interactions" value="1"/>
</dbReference>
<dbReference type="FunCoup" id="Q39236">
    <property type="interactions" value="3337"/>
</dbReference>
<dbReference type="IntAct" id="Q39236">
    <property type="interactions" value="1"/>
</dbReference>
<dbReference type="STRING" id="3702.Q39236"/>
<dbReference type="iPTMnet" id="Q39236"/>
<dbReference type="PaxDb" id="3702-AT4G24440.1"/>
<dbReference type="ProteomicsDB" id="245274"/>
<dbReference type="EnsemblPlants" id="AT4G24440.1">
    <property type="protein sequence ID" value="AT4G24440.1"/>
    <property type="gene ID" value="AT4G24440"/>
</dbReference>
<dbReference type="EnsemblPlants" id="AT4G24440.2">
    <property type="protein sequence ID" value="AT4G24440.2"/>
    <property type="gene ID" value="AT4G24440"/>
</dbReference>
<dbReference type="GeneID" id="828546"/>
<dbReference type="Gramene" id="AT4G24440.1">
    <property type="protein sequence ID" value="AT4G24440.1"/>
    <property type="gene ID" value="AT4G24440"/>
</dbReference>
<dbReference type="Gramene" id="AT4G24440.2">
    <property type="protein sequence ID" value="AT4G24440.2"/>
    <property type="gene ID" value="AT4G24440"/>
</dbReference>
<dbReference type="KEGG" id="ath:AT4G24440"/>
<dbReference type="Araport" id="AT4G24440"/>
<dbReference type="TAIR" id="AT4G24440"/>
<dbReference type="eggNOG" id="KOG3463">
    <property type="taxonomic scope" value="Eukaryota"/>
</dbReference>
<dbReference type="HOGENOM" id="CLU_112964_3_1_1"/>
<dbReference type="InParanoid" id="Q39236"/>
<dbReference type="OMA" id="QYYELYR"/>
<dbReference type="OrthoDB" id="586585at2759"/>
<dbReference type="PhylomeDB" id="Q39236"/>
<dbReference type="PRO" id="PR:Q39236"/>
<dbReference type="Proteomes" id="UP000006548">
    <property type="component" value="Chromosome 4"/>
</dbReference>
<dbReference type="ExpressionAtlas" id="Q39236">
    <property type="expression patterns" value="baseline and differential"/>
</dbReference>
<dbReference type="GO" id="GO:0005672">
    <property type="term" value="C:transcription factor TFIIA complex"/>
    <property type="evidence" value="ECO:0007669"/>
    <property type="project" value="InterPro"/>
</dbReference>
<dbReference type="GO" id="GO:0006367">
    <property type="term" value="P:transcription initiation at RNA polymerase II promoter"/>
    <property type="evidence" value="ECO:0007669"/>
    <property type="project" value="InterPro"/>
</dbReference>
<dbReference type="CDD" id="cd10014">
    <property type="entry name" value="TFIIA_gamma_C"/>
    <property type="match status" value="1"/>
</dbReference>
<dbReference type="CDD" id="cd10145">
    <property type="entry name" value="TFIIA_gamma_N"/>
    <property type="match status" value="1"/>
</dbReference>
<dbReference type="FunFam" id="1.10.287.190:FF:000001">
    <property type="entry name" value="Transcription initiation factor IIA subunit 2"/>
    <property type="match status" value="1"/>
</dbReference>
<dbReference type="FunFam" id="2.30.18.10:FF:000001">
    <property type="entry name" value="Transcription initiation factor IIA subunit 2"/>
    <property type="match status" value="1"/>
</dbReference>
<dbReference type="Gene3D" id="2.30.18.10">
    <property type="entry name" value="Transcription factor IIA (TFIIA), beta-barrel domain"/>
    <property type="match status" value="1"/>
</dbReference>
<dbReference type="Gene3D" id="1.10.287.190">
    <property type="entry name" value="Transcription factor IIA gamma subunit, alpha-helical domain"/>
    <property type="match status" value="1"/>
</dbReference>
<dbReference type="InterPro" id="IPR009083">
    <property type="entry name" value="TFIIA_a-hlx"/>
</dbReference>
<dbReference type="InterPro" id="IPR009088">
    <property type="entry name" value="TFIIA_b-brl"/>
</dbReference>
<dbReference type="InterPro" id="IPR003194">
    <property type="entry name" value="TFIIA_gsu"/>
</dbReference>
<dbReference type="InterPro" id="IPR015871">
    <property type="entry name" value="TFIIA_gsu_C"/>
</dbReference>
<dbReference type="InterPro" id="IPR015872">
    <property type="entry name" value="TFIIA_gsu_N"/>
</dbReference>
<dbReference type="PANTHER" id="PTHR10966">
    <property type="entry name" value="TRANSCRIPTION INITIATION FACTOR IIA SUBUNIT 2"/>
    <property type="match status" value="1"/>
</dbReference>
<dbReference type="Pfam" id="PF02751">
    <property type="entry name" value="TFIIA_gamma_C"/>
    <property type="match status" value="1"/>
</dbReference>
<dbReference type="Pfam" id="PF02268">
    <property type="entry name" value="TFIIA_gamma_N"/>
    <property type="match status" value="1"/>
</dbReference>
<dbReference type="PIRSF" id="PIRSF009415">
    <property type="entry name" value="Hum_TFIIA_gamma"/>
    <property type="match status" value="1"/>
</dbReference>
<dbReference type="SUPFAM" id="SSF47396">
    <property type="entry name" value="Transcription factor IIA (TFIIA), alpha-helical domain"/>
    <property type="match status" value="1"/>
</dbReference>
<dbReference type="SUPFAM" id="SSF50784">
    <property type="entry name" value="Transcription factor IIA (TFIIA), beta-barrel domain"/>
    <property type="match status" value="1"/>
</dbReference>
<comment type="function">
    <text evidence="1">TFIIA is a component of the transcription machinery of RNA polymerase II and plays an important role in transcriptional activation. TFIIA in a complex with TBP mediates transcriptional activity (By similarity).</text>
</comment>
<comment type="subunit">
    <text evidence="1">TFIIA is a heterodimer of the large unprocessed subunit 1 and a small subunit gamma. It was originally believed to be a heterotrimer of an alpha, a beta and a gamma subunit (By similarity).</text>
</comment>
<comment type="subcellular location">
    <subcellularLocation>
        <location evidence="1">Nucleus</location>
    </subcellularLocation>
</comment>
<comment type="similarity">
    <text evidence="2">Belongs to the TFIIA subunit 2 family.</text>
</comment>
<feature type="chain" id="PRO_0000194050" description="Transcription initiation factor IIA subunit 2">
    <location>
        <begin position="1"/>
        <end position="106"/>
    </location>
</feature>
<feature type="sequence conflict" description="In Ref. 1; CAA67369." evidence="2" ref="1">
    <original>L</original>
    <variation>V</variation>
    <location>
        <position position="29"/>
    </location>
</feature>
<feature type="sequence conflict" description="In Ref. 1; CAA67369." evidence="2" ref="1">
    <original>TYRFC</original>
    <variation>HLQVR</variation>
    <location>
        <begin position="65"/>
        <end position="69"/>
    </location>
</feature>
<feature type="sequence conflict" description="In Ref. 1; CAA67369." evidence="2" ref="1">
    <original>D</original>
    <variation>Y</variation>
    <location>
        <position position="85"/>
    </location>
</feature>
<feature type="sequence conflict" description="In Ref. 1; CAA67369." evidence="2" ref="1">
    <original>R</original>
    <variation>P</variation>
    <location>
        <position position="93"/>
    </location>
</feature>
<feature type="sequence conflict" description="In Ref. 1; CAA67369." evidence="2" ref="1">
    <original>C</original>
    <variation>S</variation>
    <location>
        <position position="99"/>
    </location>
</feature>
<accession>Q39236</accession>
<accession>O49348</accession>
<name>T2AG_ARATH</name>
<evidence type="ECO:0000250" key="1"/>
<evidence type="ECO:0000305" key="2"/>
<organism>
    <name type="scientific">Arabidopsis thaliana</name>
    <name type="common">Mouse-ear cress</name>
    <dbReference type="NCBI Taxonomy" id="3702"/>
    <lineage>
        <taxon>Eukaryota</taxon>
        <taxon>Viridiplantae</taxon>
        <taxon>Streptophyta</taxon>
        <taxon>Embryophyta</taxon>
        <taxon>Tracheophyta</taxon>
        <taxon>Spermatophyta</taxon>
        <taxon>Magnoliopsida</taxon>
        <taxon>eudicotyledons</taxon>
        <taxon>Gunneridae</taxon>
        <taxon>Pentapetalae</taxon>
        <taxon>rosids</taxon>
        <taxon>malvids</taxon>
        <taxon>Brassicales</taxon>
        <taxon>Brassicaceae</taxon>
        <taxon>Camelineae</taxon>
        <taxon>Arabidopsis</taxon>
    </lineage>
</organism>
<gene>
    <name type="primary">TFIIA-S</name>
    <name type="ordered locus">At4g24440</name>
    <name type="ORF">T22A6.270</name>
</gene>
<proteinExistence type="inferred from homology"/>
<keyword id="KW-0539">Nucleus</keyword>
<keyword id="KW-1185">Reference proteome</keyword>
<keyword id="KW-0804">Transcription</keyword>
<keyword id="KW-0805">Transcription regulation</keyword>